<proteinExistence type="inferred from homology"/>
<feature type="chain" id="PRO_0000176417" description="Asparagine--tRNA ligase">
    <location>
        <begin position="1"/>
        <end position="447"/>
    </location>
</feature>
<keyword id="KW-0030">Aminoacyl-tRNA synthetase</keyword>
<keyword id="KW-0067">ATP-binding</keyword>
<keyword id="KW-0963">Cytoplasm</keyword>
<keyword id="KW-0436">Ligase</keyword>
<keyword id="KW-0547">Nucleotide-binding</keyword>
<keyword id="KW-0648">Protein biosynthesis</keyword>
<keyword id="KW-1185">Reference proteome</keyword>
<dbReference type="EC" id="6.1.1.22" evidence="1"/>
<dbReference type="EMBL" id="AE005176">
    <property type="protein sequence ID" value="AAK05926.1"/>
    <property type="molecule type" value="Genomic_DNA"/>
</dbReference>
<dbReference type="PIR" id="D86853">
    <property type="entry name" value="D86853"/>
</dbReference>
<dbReference type="RefSeq" id="NP_267985.1">
    <property type="nucleotide sequence ID" value="NC_002662.1"/>
</dbReference>
<dbReference type="RefSeq" id="WP_010906156.1">
    <property type="nucleotide sequence ID" value="NC_002662.1"/>
</dbReference>
<dbReference type="SMR" id="Q9CEK9"/>
<dbReference type="PaxDb" id="272623-L0345"/>
<dbReference type="EnsemblBacteria" id="AAK05926">
    <property type="protein sequence ID" value="AAK05926"/>
    <property type="gene ID" value="L0345"/>
</dbReference>
<dbReference type="KEGG" id="lla:L0345"/>
<dbReference type="PATRIC" id="fig|272623.7.peg.1958"/>
<dbReference type="eggNOG" id="COG0017">
    <property type="taxonomic scope" value="Bacteria"/>
</dbReference>
<dbReference type="HOGENOM" id="CLU_004553_2_0_9"/>
<dbReference type="OrthoDB" id="9762036at2"/>
<dbReference type="Proteomes" id="UP000002196">
    <property type="component" value="Chromosome"/>
</dbReference>
<dbReference type="GO" id="GO:0005737">
    <property type="term" value="C:cytoplasm"/>
    <property type="evidence" value="ECO:0007669"/>
    <property type="project" value="UniProtKB-SubCell"/>
</dbReference>
<dbReference type="GO" id="GO:0004816">
    <property type="term" value="F:asparagine-tRNA ligase activity"/>
    <property type="evidence" value="ECO:0007669"/>
    <property type="project" value="UniProtKB-UniRule"/>
</dbReference>
<dbReference type="GO" id="GO:0005524">
    <property type="term" value="F:ATP binding"/>
    <property type="evidence" value="ECO:0007669"/>
    <property type="project" value="UniProtKB-UniRule"/>
</dbReference>
<dbReference type="GO" id="GO:0140096">
    <property type="term" value="F:catalytic activity, acting on a protein"/>
    <property type="evidence" value="ECO:0007669"/>
    <property type="project" value="UniProtKB-ARBA"/>
</dbReference>
<dbReference type="GO" id="GO:0003676">
    <property type="term" value="F:nucleic acid binding"/>
    <property type="evidence" value="ECO:0007669"/>
    <property type="project" value="InterPro"/>
</dbReference>
<dbReference type="GO" id="GO:0016740">
    <property type="term" value="F:transferase activity"/>
    <property type="evidence" value="ECO:0007669"/>
    <property type="project" value="UniProtKB-ARBA"/>
</dbReference>
<dbReference type="GO" id="GO:0006421">
    <property type="term" value="P:asparaginyl-tRNA aminoacylation"/>
    <property type="evidence" value="ECO:0007669"/>
    <property type="project" value="UniProtKB-UniRule"/>
</dbReference>
<dbReference type="CDD" id="cd04323">
    <property type="entry name" value="AsnRS_cyto_like_N"/>
    <property type="match status" value="1"/>
</dbReference>
<dbReference type="CDD" id="cd00776">
    <property type="entry name" value="AsxRS_core"/>
    <property type="match status" value="1"/>
</dbReference>
<dbReference type="Gene3D" id="3.30.930.10">
    <property type="entry name" value="Bira Bifunctional Protein, Domain 2"/>
    <property type="match status" value="1"/>
</dbReference>
<dbReference type="Gene3D" id="2.40.50.140">
    <property type="entry name" value="Nucleic acid-binding proteins"/>
    <property type="match status" value="1"/>
</dbReference>
<dbReference type="HAMAP" id="MF_00534">
    <property type="entry name" value="Asn_tRNA_synth"/>
    <property type="match status" value="1"/>
</dbReference>
<dbReference type="InterPro" id="IPR004364">
    <property type="entry name" value="Aa-tRNA-synt_II"/>
</dbReference>
<dbReference type="InterPro" id="IPR006195">
    <property type="entry name" value="aa-tRNA-synth_II"/>
</dbReference>
<dbReference type="InterPro" id="IPR045864">
    <property type="entry name" value="aa-tRNA-synth_II/BPL/LPL"/>
</dbReference>
<dbReference type="InterPro" id="IPR004522">
    <property type="entry name" value="Asn-tRNA-ligase"/>
</dbReference>
<dbReference type="InterPro" id="IPR002312">
    <property type="entry name" value="Asp/Asn-tRNA-synth_IIb"/>
</dbReference>
<dbReference type="InterPro" id="IPR012340">
    <property type="entry name" value="NA-bd_OB-fold"/>
</dbReference>
<dbReference type="InterPro" id="IPR004365">
    <property type="entry name" value="NA-bd_OB_tRNA"/>
</dbReference>
<dbReference type="NCBIfam" id="TIGR00457">
    <property type="entry name" value="asnS"/>
    <property type="match status" value="1"/>
</dbReference>
<dbReference type="NCBIfam" id="NF003037">
    <property type="entry name" value="PRK03932.1"/>
    <property type="match status" value="1"/>
</dbReference>
<dbReference type="PANTHER" id="PTHR22594:SF34">
    <property type="entry name" value="ASPARAGINE--TRNA LIGASE, MITOCHONDRIAL-RELATED"/>
    <property type="match status" value="1"/>
</dbReference>
<dbReference type="PANTHER" id="PTHR22594">
    <property type="entry name" value="ASPARTYL/LYSYL-TRNA SYNTHETASE"/>
    <property type="match status" value="1"/>
</dbReference>
<dbReference type="Pfam" id="PF00152">
    <property type="entry name" value="tRNA-synt_2"/>
    <property type="match status" value="1"/>
</dbReference>
<dbReference type="Pfam" id="PF01336">
    <property type="entry name" value="tRNA_anti-codon"/>
    <property type="match status" value="1"/>
</dbReference>
<dbReference type="PRINTS" id="PR01042">
    <property type="entry name" value="TRNASYNTHASP"/>
</dbReference>
<dbReference type="SUPFAM" id="SSF55681">
    <property type="entry name" value="Class II aaRS and biotin synthetases"/>
    <property type="match status" value="1"/>
</dbReference>
<dbReference type="SUPFAM" id="SSF50249">
    <property type="entry name" value="Nucleic acid-binding proteins"/>
    <property type="match status" value="1"/>
</dbReference>
<dbReference type="PROSITE" id="PS50862">
    <property type="entry name" value="AA_TRNA_LIGASE_II"/>
    <property type="match status" value="1"/>
</dbReference>
<evidence type="ECO:0000255" key="1">
    <source>
        <dbReference type="HAMAP-Rule" id="MF_00534"/>
    </source>
</evidence>
<accession>Q9CEK9</accession>
<comment type="catalytic activity">
    <reaction evidence="1">
        <text>tRNA(Asn) + L-asparagine + ATP = L-asparaginyl-tRNA(Asn) + AMP + diphosphate + H(+)</text>
        <dbReference type="Rhea" id="RHEA:11180"/>
        <dbReference type="Rhea" id="RHEA-COMP:9659"/>
        <dbReference type="Rhea" id="RHEA-COMP:9674"/>
        <dbReference type="ChEBI" id="CHEBI:15378"/>
        <dbReference type="ChEBI" id="CHEBI:30616"/>
        <dbReference type="ChEBI" id="CHEBI:33019"/>
        <dbReference type="ChEBI" id="CHEBI:58048"/>
        <dbReference type="ChEBI" id="CHEBI:78442"/>
        <dbReference type="ChEBI" id="CHEBI:78515"/>
        <dbReference type="ChEBI" id="CHEBI:456215"/>
        <dbReference type="EC" id="6.1.1.22"/>
    </reaction>
</comment>
<comment type="subunit">
    <text evidence="1">Homodimer.</text>
</comment>
<comment type="subcellular location">
    <subcellularLocation>
        <location evidence="1">Cytoplasm</location>
    </subcellularLocation>
</comment>
<comment type="similarity">
    <text evidence="1">Belongs to the class-II aminoacyl-tRNA synthetase family.</text>
</comment>
<organism>
    <name type="scientific">Lactococcus lactis subsp. lactis (strain IL1403)</name>
    <name type="common">Streptococcus lactis</name>
    <dbReference type="NCBI Taxonomy" id="272623"/>
    <lineage>
        <taxon>Bacteria</taxon>
        <taxon>Bacillati</taxon>
        <taxon>Bacillota</taxon>
        <taxon>Bacilli</taxon>
        <taxon>Lactobacillales</taxon>
        <taxon>Streptococcaceae</taxon>
        <taxon>Lactococcus</taxon>
    </lineage>
</organism>
<name>SYN_LACLA</name>
<reference key="1">
    <citation type="journal article" date="2001" name="Genome Res.">
        <title>The complete genome sequence of the lactic acid bacterium Lactococcus lactis ssp. lactis IL1403.</title>
        <authorList>
            <person name="Bolotin A."/>
            <person name="Wincker P."/>
            <person name="Mauger S."/>
            <person name="Jaillon O."/>
            <person name="Malarme K."/>
            <person name="Weissenbach J."/>
            <person name="Ehrlich S.D."/>
            <person name="Sorokin A."/>
        </authorList>
    </citation>
    <scope>NUCLEOTIDE SEQUENCE [LARGE SCALE GENOMIC DNA]</scope>
    <source>
        <strain>IL1403</strain>
    </source>
</reference>
<gene>
    <name evidence="1" type="primary">asnS</name>
    <name type="ordered locus">LL1828</name>
    <name type="ORF">L0345</name>
</gene>
<sequence length="447" mass="50840">MKDLISIIDVKDHVGETVKIGAWVADKSGKGKLQFLQLRDGTAFFQAVVFKPNMIENFGEEEGTAKFDEIKHLSQETSVYVTGVVKEDSRSKFGYELDVTDLEVIGQSHDYPITPKEHGVEFLLDNRHLWLRSKRQMAMMQVRNAIIYASYDFFAKNGFIKFDSPILSGNAAENTTELFETDYFGNSAFLSQSGQLYLEAGAMALGRVFDFGPVFRAEKSKTRRHLTEFWMMDAEYPFVTHDESLDIQEAYVKALIQGVLDNAAYALETLERDTSMLQKYIDTPFKRVSYDAAIDLLQAHENDEDTDYEHVEHGDDFGSPHETWISNYYGVPTFIVNYPASFKAFYMKPVPGNPERVLCADLLAPEGYGEIIGGSERETDYDLLLKKIADFGLDPKDYDWYLELRKFGSVPHAGFGLGLERMVTFVAGTEHIREAIPFPRMINRIQP</sequence>
<protein>
    <recommendedName>
        <fullName evidence="1">Asparagine--tRNA ligase</fullName>
        <ecNumber evidence="1">6.1.1.22</ecNumber>
    </recommendedName>
    <alternativeName>
        <fullName evidence="1">Asparaginyl-tRNA synthetase</fullName>
        <shortName evidence="1">AsnRS</shortName>
    </alternativeName>
</protein>